<sequence length="230" mass="25535">MGQQISDQTQLVINKLPEKVAKHVTLVRESGSLTYEEFLGRVAELNDVTAKVASGQEKHLLFEVQPGSDSSAFWKVVVRVVCTKINKSSGIVEASRIMNLYQFIQLYKDITSQAAGVLAQSSTSEEPDENSSSVTSCQASLWMGRVKQLTDEEECCICMDGRADLILPCAHSFCQKCIDKWSDRHRNCPICRLQMTGANESWVVSDAPTEDDMANYILNMADEAGQPHRP</sequence>
<gene>
    <name type="primary">RNF141</name>
    <name type="synonym">ZNF230</name>
</gene>
<dbReference type="EMBL" id="AF214680">
    <property type="protein sequence ID" value="AAF30180.1"/>
    <property type="molecule type" value="mRNA"/>
</dbReference>
<dbReference type="EMBL" id="AK289764">
    <property type="protein sequence ID" value="BAF82453.1"/>
    <property type="molecule type" value="mRNA"/>
</dbReference>
<dbReference type="EMBL" id="CH471064">
    <property type="protein sequence ID" value="EAW68566.1"/>
    <property type="molecule type" value="Genomic_DNA"/>
</dbReference>
<dbReference type="EMBL" id="BC018104">
    <property type="protein sequence ID" value="AAH18104.1"/>
    <property type="molecule type" value="mRNA"/>
</dbReference>
<dbReference type="EMBL" id="BT006662">
    <property type="protein sequence ID" value="AAP35308.1"/>
    <property type="molecule type" value="mRNA"/>
</dbReference>
<dbReference type="CCDS" id="CCDS7803.1">
    <molecule id="Q8WVD5-1"/>
</dbReference>
<dbReference type="RefSeq" id="NP_057506.2">
    <molecule id="Q8WVD5-1"/>
    <property type="nucleotide sequence ID" value="NM_016422.3"/>
</dbReference>
<dbReference type="PDB" id="2ECN">
    <property type="method" value="NMR"/>
    <property type="chains" value="A=145-201"/>
</dbReference>
<dbReference type="PDB" id="5XEK">
    <property type="method" value="NMR"/>
    <property type="chains" value="A=152-193"/>
</dbReference>
<dbReference type="PDBsum" id="2ECN"/>
<dbReference type="PDBsum" id="5XEK"/>
<dbReference type="BMRB" id="Q8WVD5"/>
<dbReference type="SMR" id="Q8WVD5"/>
<dbReference type="BioGRID" id="119162">
    <property type="interactions" value="12"/>
</dbReference>
<dbReference type="CORUM" id="Q8WVD5"/>
<dbReference type="FunCoup" id="Q8WVD5">
    <property type="interactions" value="885"/>
</dbReference>
<dbReference type="IntAct" id="Q8WVD5">
    <property type="interactions" value="10"/>
</dbReference>
<dbReference type="STRING" id="9606.ENSP00000265981"/>
<dbReference type="GlyGen" id="Q8WVD5">
    <property type="glycosylation" value="1 site, 1 O-linked glycan (1 site)"/>
</dbReference>
<dbReference type="iPTMnet" id="Q8WVD5"/>
<dbReference type="PhosphoSitePlus" id="Q8WVD5"/>
<dbReference type="BioMuta" id="RNF141"/>
<dbReference type="DMDM" id="74751546"/>
<dbReference type="jPOST" id="Q8WVD5"/>
<dbReference type="MassIVE" id="Q8WVD5"/>
<dbReference type="PaxDb" id="9606-ENSP00000265981"/>
<dbReference type="PeptideAtlas" id="Q8WVD5"/>
<dbReference type="ProteomicsDB" id="74780">
    <molecule id="Q8WVD5-1"/>
</dbReference>
<dbReference type="Pumba" id="Q8WVD5"/>
<dbReference type="Antibodypedia" id="11671">
    <property type="antibodies" value="193 antibodies from 30 providers"/>
</dbReference>
<dbReference type="DNASU" id="50862"/>
<dbReference type="Ensembl" id="ENST00000265981.7">
    <molecule id="Q8WVD5-1"/>
    <property type="protein sequence ID" value="ENSP00000265981.2"/>
    <property type="gene ID" value="ENSG00000110315.7"/>
</dbReference>
<dbReference type="GeneID" id="50862"/>
<dbReference type="KEGG" id="hsa:50862"/>
<dbReference type="MANE-Select" id="ENST00000265981.7">
    <property type="protein sequence ID" value="ENSP00000265981.2"/>
    <property type="RefSeq nucleotide sequence ID" value="NM_016422.4"/>
    <property type="RefSeq protein sequence ID" value="NP_057506.2"/>
</dbReference>
<dbReference type="UCSC" id="uc001mis.2">
    <molecule id="Q8WVD5-1"/>
    <property type="organism name" value="human"/>
</dbReference>
<dbReference type="AGR" id="HGNC:21159"/>
<dbReference type="CTD" id="50862"/>
<dbReference type="DisGeNET" id="50862"/>
<dbReference type="GeneCards" id="RNF141"/>
<dbReference type="HGNC" id="HGNC:21159">
    <property type="gene designation" value="RNF141"/>
</dbReference>
<dbReference type="HPA" id="ENSG00000110315">
    <property type="expression patterns" value="Low tissue specificity"/>
</dbReference>
<dbReference type="MIM" id="616641">
    <property type="type" value="gene"/>
</dbReference>
<dbReference type="neXtProt" id="NX_Q8WVD5"/>
<dbReference type="OpenTargets" id="ENSG00000110315"/>
<dbReference type="PharmGKB" id="PA134981805"/>
<dbReference type="VEuPathDB" id="HostDB:ENSG00000110315"/>
<dbReference type="eggNOG" id="KOG1039">
    <property type="taxonomic scope" value="Eukaryota"/>
</dbReference>
<dbReference type="GeneTree" id="ENSGT00390000003145"/>
<dbReference type="HOGENOM" id="CLU_080007_0_0_1"/>
<dbReference type="InParanoid" id="Q8WVD5"/>
<dbReference type="OMA" id="RHRNCPV"/>
<dbReference type="OrthoDB" id="1630758at2759"/>
<dbReference type="PAN-GO" id="Q8WVD5">
    <property type="GO annotations" value="2 GO annotations based on evolutionary models"/>
</dbReference>
<dbReference type="PhylomeDB" id="Q8WVD5"/>
<dbReference type="TreeFam" id="TF323284"/>
<dbReference type="PathwayCommons" id="Q8WVD5"/>
<dbReference type="SignaLink" id="Q8WVD5"/>
<dbReference type="SIGNOR" id="Q8WVD5"/>
<dbReference type="BioGRID-ORCS" id="50862">
    <property type="hits" value="10 hits in 1196 CRISPR screens"/>
</dbReference>
<dbReference type="ChiTaRS" id="RNF141">
    <property type="organism name" value="human"/>
</dbReference>
<dbReference type="EvolutionaryTrace" id="Q8WVD5"/>
<dbReference type="GenomeRNAi" id="50862"/>
<dbReference type="Pharos" id="Q8WVD5">
    <property type="development level" value="Tbio"/>
</dbReference>
<dbReference type="PRO" id="PR:Q8WVD5"/>
<dbReference type="Proteomes" id="UP000005640">
    <property type="component" value="Chromosome 11"/>
</dbReference>
<dbReference type="RNAct" id="Q8WVD5">
    <property type="molecule type" value="protein"/>
</dbReference>
<dbReference type="Bgee" id="ENSG00000110315">
    <property type="expression patterns" value="Expressed in endothelial cell and 190 other cell types or tissues"/>
</dbReference>
<dbReference type="ExpressionAtlas" id="Q8WVD5">
    <property type="expression patterns" value="baseline and differential"/>
</dbReference>
<dbReference type="GO" id="GO:0016020">
    <property type="term" value="C:membrane"/>
    <property type="evidence" value="ECO:0007669"/>
    <property type="project" value="UniProtKB-SubCell"/>
</dbReference>
<dbReference type="GO" id="GO:0004842">
    <property type="term" value="F:ubiquitin-protein transferase activity"/>
    <property type="evidence" value="ECO:0000314"/>
    <property type="project" value="FlyBase"/>
</dbReference>
<dbReference type="GO" id="GO:0008270">
    <property type="term" value="F:zinc ion binding"/>
    <property type="evidence" value="ECO:0007669"/>
    <property type="project" value="UniProtKB-KW"/>
</dbReference>
<dbReference type="GO" id="GO:0051865">
    <property type="term" value="P:protein autoubiquitination"/>
    <property type="evidence" value="ECO:0000314"/>
    <property type="project" value="FlyBase"/>
</dbReference>
<dbReference type="GO" id="GO:0006355">
    <property type="term" value="P:regulation of DNA-templated transcription"/>
    <property type="evidence" value="ECO:0007669"/>
    <property type="project" value="Ensembl"/>
</dbReference>
<dbReference type="CDD" id="cd16545">
    <property type="entry name" value="RING-HC_RNF141"/>
    <property type="match status" value="1"/>
</dbReference>
<dbReference type="FunFam" id="3.30.40.10:FF:000160">
    <property type="entry name" value="Ring finger protein 141"/>
    <property type="match status" value="1"/>
</dbReference>
<dbReference type="Gene3D" id="3.30.40.10">
    <property type="entry name" value="Zinc/RING finger domain, C3HC4 (zinc finger)"/>
    <property type="match status" value="1"/>
</dbReference>
<dbReference type="InterPro" id="IPR043400">
    <property type="entry name" value="RING-HC_RNF141"/>
</dbReference>
<dbReference type="InterPro" id="IPR047126">
    <property type="entry name" value="RNF141-like"/>
</dbReference>
<dbReference type="InterPro" id="IPR001841">
    <property type="entry name" value="Znf_RING"/>
</dbReference>
<dbReference type="InterPro" id="IPR013083">
    <property type="entry name" value="Znf_RING/FYVE/PHD"/>
</dbReference>
<dbReference type="InterPro" id="IPR017907">
    <property type="entry name" value="Znf_RING_CS"/>
</dbReference>
<dbReference type="PANTHER" id="PTHR12109:SF3">
    <property type="entry name" value="RING FINGER PROTEIN 141"/>
    <property type="match status" value="1"/>
</dbReference>
<dbReference type="PANTHER" id="PTHR12109">
    <property type="entry name" value="RING FINGER PROTEIN 141-RELATED"/>
    <property type="match status" value="1"/>
</dbReference>
<dbReference type="Pfam" id="PF13639">
    <property type="entry name" value="zf-RING_2"/>
    <property type="match status" value="1"/>
</dbReference>
<dbReference type="SMART" id="SM00184">
    <property type="entry name" value="RING"/>
    <property type="match status" value="1"/>
</dbReference>
<dbReference type="SUPFAM" id="SSF57850">
    <property type="entry name" value="RING/U-box"/>
    <property type="match status" value="1"/>
</dbReference>
<dbReference type="PROSITE" id="PS00518">
    <property type="entry name" value="ZF_RING_1"/>
    <property type="match status" value="1"/>
</dbReference>
<dbReference type="PROSITE" id="PS50089">
    <property type="entry name" value="ZF_RING_2"/>
    <property type="match status" value="1"/>
</dbReference>
<comment type="function">
    <text evidence="2">May be involved in spermatogenesis.</text>
</comment>
<comment type="interaction">
    <interactant intactId="EBI-4308142">
        <id>Q8WVD5</id>
    </interactant>
    <interactant intactId="EBI-740630">
        <id>Q03426</id>
        <label>MVK</label>
    </interactant>
    <organismsDiffer>false</organismsDiffer>
    <experiments>3</experiments>
</comment>
<comment type="interaction">
    <interactant intactId="EBI-4308142">
        <id>Q8WVD5</id>
    </interactant>
    <interactant intactId="EBI-751877">
        <id>Q9H4B4</id>
        <label>PLK3</label>
    </interactant>
    <organismsDiffer>false</organismsDiffer>
    <experiments>3</experiments>
</comment>
<comment type="subcellular location">
    <subcellularLocation>
        <location evidence="5">Membrane</location>
        <topology evidence="5">Lipid-anchor</topology>
    </subcellularLocation>
</comment>
<comment type="alternative products">
    <event type="alternative splicing"/>
    <isoform>
        <id>Q8WVD5-1</id>
        <name>1</name>
        <name>Short</name>
        <sequence type="displayed"/>
    </isoform>
    <isoform>
        <id>Q8WVD5-2</id>
        <name>2</name>
        <name>Long</name>
        <sequence type="not described"/>
    </isoform>
</comment>
<comment type="tissue specificity">
    <text evidence="2">Isoform 1 is testis-specific. Isoform 2 is expressed in heart, brain, skeletal muscle, kidney and pancreas. Isoform 1 is not expressed in fetus or in azoospermic patients.</text>
</comment>
<feature type="initiator methionine" description="Removed" evidence="3 4">
    <location>
        <position position="1"/>
    </location>
</feature>
<feature type="chain" id="PRO_0000056101" description="RING finger protein 141">
    <location>
        <begin position="2"/>
        <end position="230"/>
    </location>
</feature>
<feature type="zinc finger region" description="RING-type" evidence="1">
    <location>
        <begin position="155"/>
        <end position="192"/>
    </location>
</feature>
<feature type="lipid moiety-binding region" description="N-myristoyl glycine" evidence="3 4">
    <location>
        <position position="2"/>
    </location>
</feature>
<feature type="sequence conflict" description="In Ref. 1; AAF30180." evidence="5" ref="1">
    <original>L</original>
    <variation>S</variation>
    <location>
        <position position="118"/>
    </location>
</feature>
<feature type="strand" evidence="6">
    <location>
        <begin position="156"/>
        <end position="158"/>
    </location>
</feature>
<feature type="strand" evidence="6">
    <location>
        <begin position="164"/>
        <end position="167"/>
    </location>
</feature>
<feature type="turn" evidence="6">
    <location>
        <begin position="168"/>
        <end position="170"/>
    </location>
</feature>
<feature type="strand" evidence="6">
    <location>
        <begin position="171"/>
        <end position="173"/>
    </location>
</feature>
<feature type="helix" evidence="6">
    <location>
        <begin position="175"/>
        <end position="180"/>
    </location>
</feature>
<feature type="helix" evidence="6">
    <location>
        <begin position="189"/>
        <end position="193"/>
    </location>
</feature>
<reference key="1">
    <citation type="journal article" date="2001" name="Biochem. J.">
        <title>The shorter zinc finger protein ZNF230 gene message is transcribed in fertile male testes and may be related to human spermatogenesis.</title>
        <authorList>
            <person name="Zhang S."/>
            <person name="Qiu W."/>
            <person name="Wu H."/>
            <person name="Zhang G."/>
            <person name="Huang M."/>
            <person name="Xiao C."/>
            <person name="Yang J."/>
            <person name="Kamp C."/>
            <person name="Huang X."/>
            <person name="Huellen K."/>
            <person name="Yue Y."/>
            <person name="Pan A."/>
            <person name="Lebo R."/>
            <person name="Milunsky A."/>
            <person name="Vogt P.H."/>
        </authorList>
    </citation>
    <scope>NUCLEOTIDE SEQUENCE [MRNA]</scope>
    <scope>FUNCTION</scope>
    <scope>TISSUE SPECIFICITY</scope>
    <scope>ALTERNATIVE SPLICING</scope>
</reference>
<reference key="2">
    <citation type="submission" date="2003-05" db="EMBL/GenBank/DDBJ databases">
        <title>Cloning of human full-length CDSs in BD Creator(TM) system donor vector.</title>
        <authorList>
            <person name="Kalnine N."/>
            <person name="Chen X."/>
            <person name="Rolfs A."/>
            <person name="Halleck A."/>
            <person name="Hines L."/>
            <person name="Eisenstein S."/>
            <person name="Koundinya M."/>
            <person name="Raphael J."/>
            <person name="Moreira D."/>
            <person name="Kelley T."/>
            <person name="LaBaer J."/>
            <person name="Lin Y."/>
            <person name="Phelan M."/>
            <person name="Farmer A."/>
        </authorList>
    </citation>
    <scope>NUCLEOTIDE SEQUENCE [LARGE SCALE MRNA]</scope>
</reference>
<reference key="3">
    <citation type="journal article" date="2004" name="Nat. Genet.">
        <title>Complete sequencing and characterization of 21,243 full-length human cDNAs.</title>
        <authorList>
            <person name="Ota T."/>
            <person name="Suzuki Y."/>
            <person name="Nishikawa T."/>
            <person name="Otsuki T."/>
            <person name="Sugiyama T."/>
            <person name="Irie R."/>
            <person name="Wakamatsu A."/>
            <person name="Hayashi K."/>
            <person name="Sato H."/>
            <person name="Nagai K."/>
            <person name="Kimura K."/>
            <person name="Makita H."/>
            <person name="Sekine M."/>
            <person name="Obayashi M."/>
            <person name="Nishi T."/>
            <person name="Shibahara T."/>
            <person name="Tanaka T."/>
            <person name="Ishii S."/>
            <person name="Yamamoto J."/>
            <person name="Saito K."/>
            <person name="Kawai Y."/>
            <person name="Isono Y."/>
            <person name="Nakamura Y."/>
            <person name="Nagahari K."/>
            <person name="Murakami K."/>
            <person name="Yasuda T."/>
            <person name="Iwayanagi T."/>
            <person name="Wagatsuma M."/>
            <person name="Shiratori A."/>
            <person name="Sudo H."/>
            <person name="Hosoiri T."/>
            <person name="Kaku Y."/>
            <person name="Kodaira H."/>
            <person name="Kondo H."/>
            <person name="Sugawara M."/>
            <person name="Takahashi M."/>
            <person name="Kanda K."/>
            <person name="Yokoi T."/>
            <person name="Furuya T."/>
            <person name="Kikkawa E."/>
            <person name="Omura Y."/>
            <person name="Abe K."/>
            <person name="Kamihara K."/>
            <person name="Katsuta N."/>
            <person name="Sato K."/>
            <person name="Tanikawa M."/>
            <person name="Yamazaki M."/>
            <person name="Ninomiya K."/>
            <person name="Ishibashi T."/>
            <person name="Yamashita H."/>
            <person name="Murakawa K."/>
            <person name="Fujimori K."/>
            <person name="Tanai H."/>
            <person name="Kimata M."/>
            <person name="Watanabe M."/>
            <person name="Hiraoka S."/>
            <person name="Chiba Y."/>
            <person name="Ishida S."/>
            <person name="Ono Y."/>
            <person name="Takiguchi S."/>
            <person name="Watanabe S."/>
            <person name="Yosida M."/>
            <person name="Hotuta T."/>
            <person name="Kusano J."/>
            <person name="Kanehori K."/>
            <person name="Takahashi-Fujii A."/>
            <person name="Hara H."/>
            <person name="Tanase T.-O."/>
            <person name="Nomura Y."/>
            <person name="Togiya S."/>
            <person name="Komai F."/>
            <person name="Hara R."/>
            <person name="Takeuchi K."/>
            <person name="Arita M."/>
            <person name="Imose N."/>
            <person name="Musashino K."/>
            <person name="Yuuki H."/>
            <person name="Oshima A."/>
            <person name="Sasaki N."/>
            <person name="Aotsuka S."/>
            <person name="Yoshikawa Y."/>
            <person name="Matsunawa H."/>
            <person name="Ichihara T."/>
            <person name="Shiohata N."/>
            <person name="Sano S."/>
            <person name="Moriya S."/>
            <person name="Momiyama H."/>
            <person name="Satoh N."/>
            <person name="Takami S."/>
            <person name="Terashima Y."/>
            <person name="Suzuki O."/>
            <person name="Nakagawa S."/>
            <person name="Senoh A."/>
            <person name="Mizoguchi H."/>
            <person name="Goto Y."/>
            <person name="Shimizu F."/>
            <person name="Wakebe H."/>
            <person name="Hishigaki H."/>
            <person name="Watanabe T."/>
            <person name="Sugiyama A."/>
            <person name="Takemoto M."/>
            <person name="Kawakami B."/>
            <person name="Yamazaki M."/>
            <person name="Watanabe K."/>
            <person name="Kumagai A."/>
            <person name="Itakura S."/>
            <person name="Fukuzumi Y."/>
            <person name="Fujimori Y."/>
            <person name="Komiyama M."/>
            <person name="Tashiro H."/>
            <person name="Tanigami A."/>
            <person name="Fujiwara T."/>
            <person name="Ono T."/>
            <person name="Yamada K."/>
            <person name="Fujii Y."/>
            <person name="Ozaki K."/>
            <person name="Hirao M."/>
            <person name="Ohmori Y."/>
            <person name="Kawabata A."/>
            <person name="Hikiji T."/>
            <person name="Kobatake N."/>
            <person name="Inagaki H."/>
            <person name="Ikema Y."/>
            <person name="Okamoto S."/>
            <person name="Okitani R."/>
            <person name="Kawakami T."/>
            <person name="Noguchi S."/>
            <person name="Itoh T."/>
            <person name="Shigeta K."/>
            <person name="Senba T."/>
            <person name="Matsumura K."/>
            <person name="Nakajima Y."/>
            <person name="Mizuno T."/>
            <person name="Morinaga M."/>
            <person name="Sasaki M."/>
            <person name="Togashi T."/>
            <person name="Oyama M."/>
            <person name="Hata H."/>
            <person name="Watanabe M."/>
            <person name="Komatsu T."/>
            <person name="Mizushima-Sugano J."/>
            <person name="Satoh T."/>
            <person name="Shirai Y."/>
            <person name="Takahashi Y."/>
            <person name="Nakagawa K."/>
            <person name="Okumura K."/>
            <person name="Nagase T."/>
            <person name="Nomura N."/>
            <person name="Kikuchi H."/>
            <person name="Masuho Y."/>
            <person name="Yamashita R."/>
            <person name="Nakai K."/>
            <person name="Yada T."/>
            <person name="Nakamura Y."/>
            <person name="Ohara O."/>
            <person name="Isogai T."/>
            <person name="Sugano S."/>
        </authorList>
    </citation>
    <scope>NUCLEOTIDE SEQUENCE [LARGE SCALE MRNA]</scope>
    <source>
        <tissue>Brain</tissue>
    </source>
</reference>
<reference key="4">
    <citation type="submission" date="2005-09" db="EMBL/GenBank/DDBJ databases">
        <authorList>
            <person name="Mural R.J."/>
            <person name="Istrail S."/>
            <person name="Sutton G.G."/>
            <person name="Florea L."/>
            <person name="Halpern A.L."/>
            <person name="Mobarry C.M."/>
            <person name="Lippert R."/>
            <person name="Walenz B."/>
            <person name="Shatkay H."/>
            <person name="Dew I."/>
            <person name="Miller J.R."/>
            <person name="Flanigan M.J."/>
            <person name="Edwards N.J."/>
            <person name="Bolanos R."/>
            <person name="Fasulo D."/>
            <person name="Halldorsson B.V."/>
            <person name="Hannenhalli S."/>
            <person name="Turner R."/>
            <person name="Yooseph S."/>
            <person name="Lu F."/>
            <person name="Nusskern D.R."/>
            <person name="Shue B.C."/>
            <person name="Zheng X.H."/>
            <person name="Zhong F."/>
            <person name="Delcher A.L."/>
            <person name="Huson D.H."/>
            <person name="Kravitz S.A."/>
            <person name="Mouchard L."/>
            <person name="Reinert K."/>
            <person name="Remington K.A."/>
            <person name="Clark A.G."/>
            <person name="Waterman M.S."/>
            <person name="Eichler E.E."/>
            <person name="Adams M.D."/>
            <person name="Hunkapiller M.W."/>
            <person name="Myers E.W."/>
            <person name="Venter J.C."/>
        </authorList>
    </citation>
    <scope>NUCLEOTIDE SEQUENCE [LARGE SCALE GENOMIC DNA]</scope>
</reference>
<reference key="5">
    <citation type="journal article" date="2004" name="Genome Res.">
        <title>The status, quality, and expansion of the NIH full-length cDNA project: the Mammalian Gene Collection (MGC).</title>
        <authorList>
            <consortium name="The MGC Project Team"/>
        </authorList>
    </citation>
    <scope>NUCLEOTIDE SEQUENCE [LARGE SCALE MRNA]</scope>
    <source>
        <tissue>Lung</tissue>
    </source>
</reference>
<reference key="6">
    <citation type="journal article" date="2014" name="Nat. Commun.">
        <title>Global profiling of co- and post-translationally N-myristoylated proteomes in human cells.</title>
        <authorList>
            <person name="Thinon E."/>
            <person name="Serwa R.A."/>
            <person name="Broncel M."/>
            <person name="Brannigan J.A."/>
            <person name="Brassat U."/>
            <person name="Wright M.H."/>
            <person name="Heal W.P."/>
            <person name="Wilkinson A.J."/>
            <person name="Mann D.J."/>
            <person name="Tate E.W."/>
        </authorList>
    </citation>
    <scope>MYRISTOYLATION AT GLY-2</scope>
    <scope>CLEAVAGE OF INITIATOR METHIONINE</scope>
    <scope>IDENTIFICATION BY MASS SPECTROMETRY</scope>
</reference>
<reference key="7">
    <citation type="journal article" date="2015" name="Angew. Chem. Int. Ed.">
        <title>Multifunctional reagents for quantitative proteome-wide analysis of protein modification in human cells and dynamic profiling of protein lipidation during vertebrate development.</title>
        <authorList>
            <person name="Broncel M."/>
            <person name="Serwa R.A."/>
            <person name="Ciepla P."/>
            <person name="Krause E."/>
            <person name="Dallman M.J."/>
            <person name="Magee A.I."/>
            <person name="Tate E.W."/>
        </authorList>
    </citation>
    <scope>MYRISTOYLATION AT GLY-2</scope>
    <scope>CLEAVAGE OF INITIATOR METHIONINE</scope>
    <scope>IDENTIFICATION BY MASS SPECTROMETRY</scope>
</reference>
<reference key="8">
    <citation type="submission" date="2007-08" db="PDB data bank">
        <title>Solution structure of the RING domain of the human RING finger protein 141.</title>
        <authorList>
            <consortium name="RIKEN structural genomics initiative (RSGI)"/>
        </authorList>
    </citation>
    <scope>STRUCTURE BY NMR OF 144-201</scope>
</reference>
<name>RN141_HUMAN</name>
<accession>Q8WVD5</accession>
<accession>A8K149</accession>
<accession>Q9NZB4</accession>
<organism>
    <name type="scientific">Homo sapiens</name>
    <name type="common">Human</name>
    <dbReference type="NCBI Taxonomy" id="9606"/>
    <lineage>
        <taxon>Eukaryota</taxon>
        <taxon>Metazoa</taxon>
        <taxon>Chordata</taxon>
        <taxon>Craniata</taxon>
        <taxon>Vertebrata</taxon>
        <taxon>Euteleostomi</taxon>
        <taxon>Mammalia</taxon>
        <taxon>Eutheria</taxon>
        <taxon>Euarchontoglires</taxon>
        <taxon>Primates</taxon>
        <taxon>Haplorrhini</taxon>
        <taxon>Catarrhini</taxon>
        <taxon>Hominidae</taxon>
        <taxon>Homo</taxon>
    </lineage>
</organism>
<keyword id="KW-0002">3D-structure</keyword>
<keyword id="KW-0025">Alternative splicing</keyword>
<keyword id="KW-0449">Lipoprotein</keyword>
<keyword id="KW-0472">Membrane</keyword>
<keyword id="KW-0479">Metal-binding</keyword>
<keyword id="KW-0519">Myristate</keyword>
<keyword id="KW-1267">Proteomics identification</keyword>
<keyword id="KW-1185">Reference proteome</keyword>
<keyword id="KW-0862">Zinc</keyword>
<keyword id="KW-0863">Zinc-finger</keyword>
<protein>
    <recommendedName>
        <fullName>RING finger protein 141</fullName>
    </recommendedName>
    <alternativeName>
        <fullName>Zinc finger protein 230</fullName>
    </alternativeName>
</protein>
<evidence type="ECO:0000255" key="1">
    <source>
        <dbReference type="PROSITE-ProRule" id="PRU00175"/>
    </source>
</evidence>
<evidence type="ECO:0000269" key="2">
    <source>
    </source>
</evidence>
<evidence type="ECO:0000269" key="3">
    <source>
    </source>
</evidence>
<evidence type="ECO:0000269" key="4">
    <source>
    </source>
</evidence>
<evidence type="ECO:0000305" key="5"/>
<evidence type="ECO:0007829" key="6">
    <source>
        <dbReference type="PDB" id="2ECN"/>
    </source>
</evidence>
<proteinExistence type="evidence at protein level"/>